<name>NUOH_BART1</name>
<dbReference type="EC" id="7.1.1.-" evidence="1"/>
<dbReference type="EMBL" id="AM260525">
    <property type="protein sequence ID" value="CAK01580.1"/>
    <property type="molecule type" value="Genomic_DNA"/>
</dbReference>
<dbReference type="RefSeq" id="WP_012231782.1">
    <property type="nucleotide sequence ID" value="NC_010161.1"/>
</dbReference>
<dbReference type="SMR" id="A9IUN6"/>
<dbReference type="KEGG" id="btr:BT_1210"/>
<dbReference type="eggNOG" id="COG1005">
    <property type="taxonomic scope" value="Bacteria"/>
</dbReference>
<dbReference type="HOGENOM" id="CLU_015134_0_1_5"/>
<dbReference type="Proteomes" id="UP000001592">
    <property type="component" value="Chromosome"/>
</dbReference>
<dbReference type="GO" id="GO:0005886">
    <property type="term" value="C:plasma membrane"/>
    <property type="evidence" value="ECO:0007669"/>
    <property type="project" value="UniProtKB-SubCell"/>
</dbReference>
<dbReference type="GO" id="GO:0003954">
    <property type="term" value="F:NADH dehydrogenase activity"/>
    <property type="evidence" value="ECO:0007669"/>
    <property type="project" value="TreeGrafter"/>
</dbReference>
<dbReference type="GO" id="GO:0016655">
    <property type="term" value="F:oxidoreductase activity, acting on NAD(P)H, quinone or similar compound as acceptor"/>
    <property type="evidence" value="ECO:0007669"/>
    <property type="project" value="UniProtKB-UniRule"/>
</dbReference>
<dbReference type="GO" id="GO:0048038">
    <property type="term" value="F:quinone binding"/>
    <property type="evidence" value="ECO:0007669"/>
    <property type="project" value="UniProtKB-KW"/>
</dbReference>
<dbReference type="GO" id="GO:0009060">
    <property type="term" value="P:aerobic respiration"/>
    <property type="evidence" value="ECO:0007669"/>
    <property type="project" value="TreeGrafter"/>
</dbReference>
<dbReference type="HAMAP" id="MF_01350">
    <property type="entry name" value="NDH1_NuoH"/>
    <property type="match status" value="1"/>
</dbReference>
<dbReference type="InterPro" id="IPR001694">
    <property type="entry name" value="NADH_UbQ_OxRdtase_su1/FPO"/>
</dbReference>
<dbReference type="InterPro" id="IPR018086">
    <property type="entry name" value="NADH_UbQ_OxRdtase_su1_CS"/>
</dbReference>
<dbReference type="NCBIfam" id="NF004741">
    <property type="entry name" value="PRK06076.1-2"/>
    <property type="match status" value="1"/>
</dbReference>
<dbReference type="NCBIfam" id="NF004745">
    <property type="entry name" value="PRK06076.1-6"/>
    <property type="match status" value="1"/>
</dbReference>
<dbReference type="PANTHER" id="PTHR11432">
    <property type="entry name" value="NADH DEHYDROGENASE SUBUNIT 1"/>
    <property type="match status" value="1"/>
</dbReference>
<dbReference type="PANTHER" id="PTHR11432:SF3">
    <property type="entry name" value="NADH-UBIQUINONE OXIDOREDUCTASE CHAIN 1"/>
    <property type="match status" value="1"/>
</dbReference>
<dbReference type="Pfam" id="PF00146">
    <property type="entry name" value="NADHdh"/>
    <property type="match status" value="1"/>
</dbReference>
<dbReference type="PROSITE" id="PS00668">
    <property type="entry name" value="COMPLEX1_ND1_2"/>
    <property type="match status" value="1"/>
</dbReference>
<keyword id="KW-0997">Cell inner membrane</keyword>
<keyword id="KW-1003">Cell membrane</keyword>
<keyword id="KW-0472">Membrane</keyword>
<keyword id="KW-0520">NAD</keyword>
<keyword id="KW-0874">Quinone</keyword>
<keyword id="KW-1278">Translocase</keyword>
<keyword id="KW-0812">Transmembrane</keyword>
<keyword id="KW-1133">Transmembrane helix</keyword>
<keyword id="KW-0830">Ubiquinone</keyword>
<proteinExistence type="inferred from homology"/>
<comment type="function">
    <text evidence="1">NDH-1 shuttles electrons from NADH, via FMN and iron-sulfur (Fe-S) centers, to quinones in the respiratory chain. The immediate electron acceptor for the enzyme in this species is believed to be ubiquinone. Couples the redox reaction to proton translocation (for every two electrons transferred, four hydrogen ions are translocated across the cytoplasmic membrane), and thus conserves the redox energy in a proton gradient. This subunit may bind ubiquinone.</text>
</comment>
<comment type="catalytic activity">
    <reaction evidence="1">
        <text>a quinone + NADH + 5 H(+)(in) = a quinol + NAD(+) + 4 H(+)(out)</text>
        <dbReference type="Rhea" id="RHEA:57888"/>
        <dbReference type="ChEBI" id="CHEBI:15378"/>
        <dbReference type="ChEBI" id="CHEBI:24646"/>
        <dbReference type="ChEBI" id="CHEBI:57540"/>
        <dbReference type="ChEBI" id="CHEBI:57945"/>
        <dbReference type="ChEBI" id="CHEBI:132124"/>
    </reaction>
</comment>
<comment type="subunit">
    <text evidence="1">NDH-1 is composed of 14 different subunits. Subunits NuoA, H, J, K, L, M, N constitute the membrane sector of the complex.</text>
</comment>
<comment type="subcellular location">
    <subcellularLocation>
        <location evidence="1">Cell inner membrane</location>
        <topology evidence="1">Multi-pass membrane protein</topology>
    </subcellularLocation>
</comment>
<comment type="similarity">
    <text evidence="1">Belongs to the complex I subunit 1 family.</text>
</comment>
<reference key="1">
    <citation type="journal article" date="2007" name="Nat. Genet.">
        <title>Genomic analysis of Bartonella identifies type IV secretion systems as host adaptability factors.</title>
        <authorList>
            <person name="Saenz H.L."/>
            <person name="Engel P."/>
            <person name="Stoeckli M.C."/>
            <person name="Lanz C."/>
            <person name="Raddatz G."/>
            <person name="Vayssier-Taussat M."/>
            <person name="Birtles R."/>
            <person name="Schuster S.C."/>
            <person name="Dehio C."/>
        </authorList>
    </citation>
    <scope>NUCLEOTIDE SEQUENCE [LARGE SCALE GENOMIC DNA]</scope>
    <source>
        <strain>CIP 105476 / IBS 506</strain>
    </source>
</reference>
<feature type="chain" id="PRO_1000086934" description="NADH-quinone oxidoreductase subunit H">
    <location>
        <begin position="1"/>
        <end position="348"/>
    </location>
</feature>
<feature type="transmembrane region" description="Helical" evidence="1">
    <location>
        <begin position="10"/>
        <end position="30"/>
    </location>
</feature>
<feature type="transmembrane region" description="Helical" evidence="1">
    <location>
        <begin position="82"/>
        <end position="102"/>
    </location>
</feature>
<feature type="transmembrane region" description="Helical" evidence="1">
    <location>
        <begin position="115"/>
        <end position="135"/>
    </location>
</feature>
<feature type="transmembrane region" description="Helical" evidence="1">
    <location>
        <begin position="161"/>
        <end position="181"/>
    </location>
</feature>
<feature type="transmembrane region" description="Helical" evidence="1">
    <location>
        <begin position="199"/>
        <end position="219"/>
    </location>
</feature>
<feature type="transmembrane region" description="Helical" evidence="1">
    <location>
        <begin position="251"/>
        <end position="271"/>
    </location>
</feature>
<feature type="transmembrane region" description="Helical" evidence="1">
    <location>
        <begin position="287"/>
        <end position="307"/>
    </location>
</feature>
<feature type="transmembrane region" description="Helical" evidence="1">
    <location>
        <begin position="322"/>
        <end position="342"/>
    </location>
</feature>
<accession>A9IUN6</accession>
<organism>
    <name type="scientific">Bartonella tribocorum (strain CIP 105476 / IBS 506)</name>
    <dbReference type="NCBI Taxonomy" id="382640"/>
    <lineage>
        <taxon>Bacteria</taxon>
        <taxon>Pseudomonadati</taxon>
        <taxon>Pseudomonadota</taxon>
        <taxon>Alphaproteobacteria</taxon>
        <taxon>Hyphomicrobiales</taxon>
        <taxon>Bartonellaceae</taxon>
        <taxon>Bartonella</taxon>
    </lineage>
</organism>
<sequence length="348" mass="39013">MYDFFMTWLLPFLIIVGKTLLLLVVLLVLVAYLLYADRKIWAAVQLRRGPNVVGPWGLLQSFADLIKFVVKEPIIPAGANKGVFLLAPFVSATLALSTWAVIPVSEGWEVAKINVGLLYILAISSLEVYGVIMGGWASNSKYPFLGALRSAAQMVSYEVSIGFVLVTVILISGSLDLTTIVLKQGQGLGTTLGLPFNSFLDWNWLVLFPMFIIFFISALAETNRPPFDLVEAESELVAGHMVEYSSTPYMLFFLGEYVAIVLMCALTTILFLGGWLPPLDVWWLNWIPGVIWFVLKVCFVFFWFAIVKAFVPRYRYDQLMRLGWKVFLPLSLAMVVITAAFLKFTNFV</sequence>
<evidence type="ECO:0000255" key="1">
    <source>
        <dbReference type="HAMAP-Rule" id="MF_01350"/>
    </source>
</evidence>
<protein>
    <recommendedName>
        <fullName evidence="1">NADH-quinone oxidoreductase subunit H</fullName>
        <ecNumber evidence="1">7.1.1.-</ecNumber>
    </recommendedName>
    <alternativeName>
        <fullName evidence="1">NADH dehydrogenase I subunit H</fullName>
    </alternativeName>
    <alternativeName>
        <fullName evidence="1">NDH-1 subunit H</fullName>
    </alternativeName>
</protein>
<gene>
    <name evidence="1" type="primary">nuoH</name>
    <name type="ordered locus">BT_1210</name>
</gene>